<keyword id="KW-0002">3D-structure</keyword>
<keyword id="KW-0007">Acetylation</keyword>
<keyword id="KW-0053">Apoptosis</keyword>
<keyword id="KW-0963">Cytoplasm</keyword>
<keyword id="KW-0238">DNA-binding</keyword>
<keyword id="KW-0378">Hydrolase</keyword>
<keyword id="KW-0395">Inflammatory response</keyword>
<keyword id="KW-0458">Lysosome</keyword>
<keyword id="KW-0479">Metal-binding</keyword>
<keyword id="KW-0511">Multifunctional enzyme</keyword>
<keyword id="KW-0539">Nucleus</keyword>
<keyword id="KW-0597">Phosphoprotein</keyword>
<keyword id="KW-0645">Protease</keyword>
<keyword id="KW-1185">Reference proteome</keyword>
<keyword id="KW-0677">Repeat</keyword>
<keyword id="KW-0788">Thiol protease</keyword>
<keyword id="KW-0808">Transferase</keyword>
<keyword id="KW-0833">Ubl conjugation pathway</keyword>
<keyword id="KW-0862">Zinc</keyword>
<keyword id="KW-0863">Zinc-finger</keyword>
<comment type="function">
    <text evidence="6 7 8 9 10 11">Ubiquitin-editing enzyme that contains both ubiquitin ligase and deubiquitinase activities. Involved in immune and inflammatory responses signaled by cytokines, such as TNF-alpha and IL-1 beta, or pathogens via Toll-like receptors (TLRs) through terminating NF-kappa-B activity. Essential component of a ubiquitin-editing protein complex, comprising also RNF11, ITCH and TAX1BP1, that ensures the transient nature of inflammatory signaling pathways. In cooperation with TAX1BP1 promotes disassembly of E2-E3 ubiquitin protein ligase complexes in IL-1R and TNFR-1 pathways; affected are at least E3 ligases TRAF6, TRAF2 and BIRC2, and E2 ubiquitin-conjugating enzymes UBE2N and UBE2D3. In cooperation with TAX1BP1 promotes ubiquitination of UBE2N and proteasomal degradation of UBE2N and UBE2D3. Upon TNF stimulation, deubiquitinates 'Lys-63'-polyubiquitin chains on RIPK1 and catalyzes the formation of 'Lys-48'-polyubiquitin chains. This leads to RIPK1 proteasomal degradation and consequently termination of the TNF- or LPS-mediated activation of NF-kappa-B. Deubiquitinates TRAF6 probably acting on 'Lys-63'-linked polyubiquitin. Upon T-cell receptor (TCR)-mediated T-cell activation, deubiquitinates 'Lys-63'-polyubiquitin chains on MALT1 thereby mediating disassociation of the CBM (CARD11:BCL10:MALT1) and IKK complexes and preventing sustained IKK activation. Deubiquitinates NEMO/IKBKG; the function is facilitated by TNIP1 and leads to inhibition of NF-kappa-B activation. Upon stimulation by bacterial peptidoglycans, probably deubiquitinates RIPK2. Can also inhibit I-kappa-B-kinase (IKK) through a non-catalytic mechanism which involves polyubiquitin; polyubiquitin promotes association with IKBKG and prevents IKK MAP3K7-mediated phosphorylation. Targets TRAF2 for lysosomal degradation. In vitro able to deubiquitinate 'Lys-11'-, 'Lys-48'- and 'Lys-63' polyubiquitin chains. Inhibitor of programmed cell death. Has a role in the function of the lymphoid system. Required for LPS-induced production of pro-inflammatory cytokines and IFN beta in LPS-tolerized macrophages.</text>
</comment>
<comment type="catalytic activity">
    <reaction evidence="8">
        <text>Thiol-dependent hydrolysis of ester, thioester, amide, peptide and isopeptide bonds formed by the C-terminal Gly of ubiquitin (a 76-residue protein attached to proteins as an intracellular targeting signal).</text>
        <dbReference type="EC" id="3.4.19.12"/>
    </reaction>
</comment>
<comment type="subunit">
    <text evidence="1">Homodimer. Interacts with TNIP1, TAX1BP1 and TRAF2. Interacts with RNF11, ITCH and TAX1BP1 only after TNF stimulation; these interaction are transient and they are lost after 1 hour of stimulation with TNF (By similarity). Interacts with YWHAZ and YWHAH. Interacts with IKBKG; the interaction is induced by TNF stimulation and by polyubiquitin. Interacts with RIPK1. Interacts with UBE2N; the interaction requires TAX1BP1. Interacts with TRAF6 (By similarity).</text>
</comment>
<comment type="interaction">
    <interactant intactId="EBI-646595">
        <id>Q60769</id>
    </interactant>
    <interactant intactId="EBI-309962">
        <id>Q9CYZ8</id>
        <label>Ssbp2</label>
    </interactant>
    <organismsDiffer>false</organismsDiffer>
    <experiments>2</experiments>
</comment>
<comment type="interaction">
    <interactant intactId="EBI-646595">
        <id>Q60769</id>
    </interactant>
    <interactant intactId="EBI-6126152">
        <id>Q9WUU8</id>
        <label>Tnip1</label>
    </interactant>
    <organismsDiffer>false</organismsDiffer>
    <experiments>4</experiments>
</comment>
<comment type="interaction">
    <interactant intactId="EBI-646595">
        <id>Q60769</id>
    </interactant>
    <interactant intactId="EBI-520016">
        <id>P39429</id>
        <label>Traf2</label>
    </interactant>
    <organismsDiffer>false</organismsDiffer>
    <experiments>3</experiments>
</comment>
<comment type="interaction">
    <interactant intactId="EBI-646595">
        <id>Q60769</id>
    </interactant>
    <interactant intactId="EBI-359977">
        <id>P01375</id>
        <label>TNF</label>
    </interactant>
    <organismsDiffer>true</organismsDiffer>
    <experiments>2</experiments>
</comment>
<comment type="subcellular location">
    <subcellularLocation>
        <location evidence="1">Cytoplasm</location>
    </subcellularLocation>
    <subcellularLocation>
        <location evidence="1">Nucleus</location>
    </subcellularLocation>
    <subcellularLocation>
        <location evidence="1">Lysosome</location>
    </subcellularLocation>
</comment>
<comment type="tissue specificity">
    <text>Found in most tissues during development. Strikingly high levels are found in lymphoid organs, including the thymus, spleen, and gut-associated lymphoid tissue. Constitutively expressed in immature and mature thymocyte subpopulations as well as in resting peripheral T-cells; activation of these leads to down-regulation.</text>
</comment>
<comment type="induction">
    <text evidence="11">By cytokines. TNF-alpha may regulate expression in the thymus. Up-regulated in presence of reactive oxygen species (ROS), like H(2)O(2), in LPS-tolerized macrophages.</text>
</comment>
<comment type="domain">
    <text evidence="1">The A20-type zinc fingers mediate the ubiquitin ligase activity. The A20-type zinc finger 4 selectively recognizes 'Lys-63'-linked polyubiquitin. The A20-type zinc finger 4-7 are sufficient to bind polyubiquitin (By similarity).</text>
</comment>
<comment type="domain">
    <text evidence="1">The OTU domain mediates the deubiquitinase activity.</text>
</comment>
<comment type="similarity">
    <text evidence="12">Belongs to the peptidase C64 family.</text>
</comment>
<name>TNAP3_MOUSE</name>
<feature type="initiator methionine" description="Removed" evidence="2">
    <location>
        <position position="1"/>
    </location>
</feature>
<feature type="chain" id="PRO_0000188793" description="Tumor necrosis factor alpha-induced protein 3">
    <location>
        <begin position="2"/>
        <end position="775"/>
    </location>
</feature>
<feature type="domain" description="OTU" evidence="3">
    <location>
        <begin position="92"/>
        <end position="263"/>
    </location>
</feature>
<feature type="zinc finger region" description="A20-type 1" evidence="4">
    <location>
        <begin position="381"/>
        <end position="416"/>
    </location>
</feature>
<feature type="zinc finger region" description="A20-type 2" evidence="4">
    <location>
        <begin position="464"/>
        <end position="499"/>
    </location>
</feature>
<feature type="zinc finger region" description="A20-type 3" evidence="4">
    <location>
        <begin position="500"/>
        <end position="533"/>
    </location>
</feature>
<feature type="zinc finger region" description="A20-type 4" evidence="4">
    <location>
        <begin position="586"/>
        <end position="621"/>
    </location>
</feature>
<feature type="zinc finger region" description="A20-type 5" evidence="4">
    <location>
        <begin position="636"/>
        <end position="671"/>
    </location>
</feature>
<feature type="zinc finger region" description="A20-type 6" evidence="4">
    <location>
        <begin position="695"/>
        <end position="730"/>
    </location>
</feature>
<feature type="zinc finger region" description="A20-type 7" evidence="4">
    <location>
        <begin position="741"/>
        <end position="775"/>
    </location>
</feature>
<feature type="region of interest" description="TRAF-binding" evidence="1">
    <location>
        <begin position="58"/>
        <end position="300"/>
    </location>
</feature>
<feature type="region of interest" description="Interaction with ubiquitin" evidence="1">
    <location>
        <begin position="157"/>
        <end position="159"/>
    </location>
</feature>
<feature type="region of interest" description="Interaction with ubiquitin" evidence="1">
    <location>
        <begin position="190"/>
        <end position="192"/>
    </location>
</feature>
<feature type="region of interest" description="Interaction with ubiquitin" evidence="1">
    <location>
        <begin position="224"/>
        <end position="227"/>
    </location>
</feature>
<feature type="region of interest" description="Interaction with TNIP1" evidence="7">
    <location>
        <begin position="369"/>
        <end position="775"/>
    </location>
</feature>
<feature type="region of interest" description="Interaction with RIPK1" evidence="1">
    <location>
        <begin position="386"/>
        <end position="445"/>
    </location>
</feature>
<feature type="region of interest" description="Disordered" evidence="5">
    <location>
        <begin position="415"/>
        <end position="455"/>
    </location>
</feature>
<feature type="region of interest" description="Disordered" evidence="5">
    <location>
        <begin position="567"/>
        <end position="590"/>
    </location>
</feature>
<feature type="region of interest" description="Required for proteasomal degradation of UBE2N and UBE2D3, TRAF6 deubiquitination, and TAX1BP1 interaction with UBE2N" evidence="10">
    <location>
        <begin position="590"/>
        <end position="640"/>
    </location>
</feature>
<feature type="region of interest" description="Sufficient for inhibitory activity of TNF-induced NF-kappa-B activity">
    <location>
        <begin position="591"/>
        <end position="775"/>
    </location>
</feature>
<feature type="region of interest" description="Required for lysosomal localization and for TRAF2 lysosomal degradation" evidence="1">
    <location>
        <begin position="682"/>
        <end position="775"/>
    </location>
</feature>
<feature type="compositionally biased region" description="Polar residues" evidence="5">
    <location>
        <begin position="567"/>
        <end position="580"/>
    </location>
</feature>
<feature type="active site" evidence="1">
    <location>
        <position position="100"/>
    </location>
</feature>
<feature type="active site" description="Nucleophile" evidence="1">
    <location>
        <position position="103"/>
    </location>
</feature>
<feature type="active site" description="Proton acceptor" evidence="1">
    <location>
        <position position="256"/>
    </location>
</feature>
<feature type="binding site" evidence="4">
    <location>
        <position position="387"/>
    </location>
    <ligand>
        <name>Zn(2+)</name>
        <dbReference type="ChEBI" id="CHEBI:29105"/>
        <label>1</label>
    </ligand>
</feature>
<feature type="binding site" evidence="4">
    <location>
        <position position="392"/>
    </location>
    <ligand>
        <name>Zn(2+)</name>
        <dbReference type="ChEBI" id="CHEBI:29105"/>
        <label>1</label>
    </ligand>
</feature>
<feature type="binding site" evidence="4">
    <location>
        <position position="404"/>
    </location>
    <ligand>
        <name>Zn(2+)</name>
        <dbReference type="ChEBI" id="CHEBI:29105"/>
        <label>1</label>
    </ligand>
</feature>
<feature type="binding site" evidence="4">
    <location>
        <position position="407"/>
    </location>
    <ligand>
        <name>Zn(2+)</name>
        <dbReference type="ChEBI" id="CHEBI:29105"/>
        <label>1</label>
    </ligand>
</feature>
<feature type="binding site" evidence="4">
    <location>
        <position position="470"/>
    </location>
    <ligand>
        <name>Zn(2+)</name>
        <dbReference type="ChEBI" id="CHEBI:29105"/>
        <label>2</label>
    </ligand>
</feature>
<feature type="binding site" evidence="4">
    <location>
        <position position="475"/>
    </location>
    <ligand>
        <name>Zn(2+)</name>
        <dbReference type="ChEBI" id="CHEBI:29105"/>
        <label>2</label>
    </ligand>
</feature>
<feature type="binding site" evidence="4">
    <location>
        <position position="487"/>
    </location>
    <ligand>
        <name>Zn(2+)</name>
        <dbReference type="ChEBI" id="CHEBI:29105"/>
        <label>2</label>
    </ligand>
</feature>
<feature type="binding site" evidence="4">
    <location>
        <position position="490"/>
    </location>
    <ligand>
        <name>Zn(2+)</name>
        <dbReference type="ChEBI" id="CHEBI:29105"/>
        <label>2</label>
    </ligand>
</feature>
<feature type="binding site" evidence="4">
    <location>
        <position position="506"/>
    </location>
    <ligand>
        <name>Zn(2+)</name>
        <dbReference type="ChEBI" id="CHEBI:29105"/>
        <label>3</label>
    </ligand>
</feature>
<feature type="binding site" evidence="4">
    <location>
        <position position="509"/>
    </location>
    <ligand>
        <name>Zn(2+)</name>
        <dbReference type="ChEBI" id="CHEBI:29105"/>
        <label>3</label>
    </ligand>
</feature>
<feature type="binding site" evidence="4">
    <location>
        <position position="521"/>
    </location>
    <ligand>
        <name>Zn(2+)</name>
        <dbReference type="ChEBI" id="CHEBI:29105"/>
        <label>3</label>
    </ligand>
</feature>
<feature type="binding site" evidence="4">
    <location>
        <position position="524"/>
    </location>
    <ligand>
        <name>Zn(2+)</name>
        <dbReference type="ChEBI" id="CHEBI:29105"/>
        <label>3</label>
    </ligand>
</feature>
<feature type="binding site" evidence="4">
    <location>
        <position position="592"/>
    </location>
    <ligand>
        <name>Zn(2+)</name>
        <dbReference type="ChEBI" id="CHEBI:29105"/>
        <label>4</label>
    </ligand>
</feature>
<feature type="binding site" evidence="4">
    <location>
        <position position="597"/>
    </location>
    <ligand>
        <name>Zn(2+)</name>
        <dbReference type="ChEBI" id="CHEBI:29105"/>
        <label>4</label>
    </ligand>
</feature>
<feature type="binding site" evidence="4">
    <location>
        <position position="609"/>
    </location>
    <ligand>
        <name>Zn(2+)</name>
        <dbReference type="ChEBI" id="CHEBI:29105"/>
        <label>4</label>
    </ligand>
</feature>
<feature type="binding site" evidence="4">
    <location>
        <position position="612"/>
    </location>
    <ligand>
        <name>Zn(2+)</name>
        <dbReference type="ChEBI" id="CHEBI:29105"/>
        <label>4</label>
    </ligand>
</feature>
<feature type="binding site" evidence="4">
    <location>
        <position position="642"/>
    </location>
    <ligand>
        <name>Zn(2+)</name>
        <dbReference type="ChEBI" id="CHEBI:29105"/>
        <label>5</label>
    </ligand>
</feature>
<feature type="binding site" evidence="4">
    <location>
        <position position="647"/>
    </location>
    <ligand>
        <name>Zn(2+)</name>
        <dbReference type="ChEBI" id="CHEBI:29105"/>
        <label>5</label>
    </ligand>
</feature>
<feature type="binding site" evidence="4">
    <location>
        <position position="659"/>
    </location>
    <ligand>
        <name>Zn(2+)</name>
        <dbReference type="ChEBI" id="CHEBI:29105"/>
        <label>5</label>
    </ligand>
</feature>
<feature type="binding site" evidence="4">
    <location>
        <position position="662"/>
    </location>
    <ligand>
        <name>Zn(2+)</name>
        <dbReference type="ChEBI" id="CHEBI:29105"/>
        <label>5</label>
    </ligand>
</feature>
<feature type="binding site" evidence="4">
    <location>
        <position position="701"/>
    </location>
    <ligand>
        <name>Zn(2+)</name>
        <dbReference type="ChEBI" id="CHEBI:29105"/>
        <label>6</label>
    </ligand>
</feature>
<feature type="binding site" evidence="4">
    <location>
        <position position="706"/>
    </location>
    <ligand>
        <name>Zn(2+)</name>
        <dbReference type="ChEBI" id="CHEBI:29105"/>
        <label>6</label>
    </ligand>
</feature>
<feature type="binding site" evidence="4">
    <location>
        <position position="718"/>
    </location>
    <ligand>
        <name>Zn(2+)</name>
        <dbReference type="ChEBI" id="CHEBI:29105"/>
        <label>6</label>
    </ligand>
</feature>
<feature type="binding site" evidence="4">
    <location>
        <position position="721"/>
    </location>
    <ligand>
        <name>Zn(2+)</name>
        <dbReference type="ChEBI" id="CHEBI:29105"/>
        <label>6</label>
    </ligand>
</feature>
<feature type="binding site" evidence="4">
    <location>
        <position position="747"/>
    </location>
    <ligand>
        <name>Zn(2+)</name>
        <dbReference type="ChEBI" id="CHEBI:29105"/>
        <label>7</label>
    </ligand>
</feature>
<feature type="binding site" evidence="4">
    <location>
        <position position="752"/>
    </location>
    <ligand>
        <name>Zn(2+)</name>
        <dbReference type="ChEBI" id="CHEBI:29105"/>
        <label>7</label>
    </ligand>
</feature>
<feature type="binding site" evidence="4">
    <location>
        <position position="764"/>
    </location>
    <ligand>
        <name>Zn(2+)</name>
        <dbReference type="ChEBI" id="CHEBI:29105"/>
        <label>7</label>
    </ligand>
</feature>
<feature type="binding site" evidence="4">
    <location>
        <position position="767"/>
    </location>
    <ligand>
        <name>Zn(2+)</name>
        <dbReference type="ChEBI" id="CHEBI:29105"/>
        <label>7</label>
    </ligand>
</feature>
<feature type="modified residue" description="N-acetylalanine" evidence="2">
    <location>
        <position position="2"/>
    </location>
</feature>
<feature type="modified residue" description="Phosphoserine" evidence="2">
    <location>
        <position position="451"/>
    </location>
</feature>
<feature type="mutagenesis site" description="Loss of deubiquitinating activity." evidence="8">
    <original>D</original>
    <variation>A</variation>
    <location>
        <position position="100"/>
    </location>
</feature>
<feature type="mutagenesis site" description="Loss of deubiquitinating activity, does not disassemble TRAF6:UBE2N ubiquitin ligase complex, abolioshes TAX1BP1 interaction with UBE2N." evidence="8 10">
    <original>C</original>
    <variation>A</variation>
    <location>
        <position position="103"/>
    </location>
</feature>
<feature type="sequence conflict" description="In Ref. 1; AAC52153." evidence="12" ref="1">
    <original>E</original>
    <variation>A</variation>
    <location>
        <position position="627"/>
    </location>
</feature>
<feature type="turn" evidence="13">
    <location>
        <begin position="10"/>
        <end position="14"/>
    </location>
</feature>
<feature type="helix" evidence="13">
    <location>
        <begin position="15"/>
        <end position="24"/>
    </location>
</feature>
<feature type="helix" evidence="13">
    <location>
        <begin position="26"/>
        <end position="28"/>
    </location>
</feature>
<feature type="strand" evidence="13">
    <location>
        <begin position="39"/>
        <end position="42"/>
    </location>
</feature>
<feature type="helix" evidence="13">
    <location>
        <begin position="43"/>
        <end position="45"/>
    </location>
</feature>
<feature type="helix" evidence="13">
    <location>
        <begin position="58"/>
        <end position="68"/>
    </location>
</feature>
<feature type="helix" evidence="13">
    <location>
        <begin position="71"/>
        <end position="78"/>
    </location>
</feature>
<feature type="turn" evidence="13">
    <location>
        <begin position="79"/>
        <end position="81"/>
    </location>
</feature>
<feature type="strand" evidence="13">
    <location>
        <begin position="93"/>
        <end position="95"/>
    </location>
</feature>
<feature type="helix" evidence="13">
    <location>
        <begin position="103"/>
        <end position="113"/>
    </location>
</feature>
<feature type="helix" evidence="13">
    <location>
        <begin position="121"/>
        <end position="132"/>
    </location>
</feature>
<feature type="helix" evidence="13">
    <location>
        <begin position="136"/>
        <end position="145"/>
    </location>
</feature>
<feature type="turn" evidence="13">
    <location>
        <begin position="146"/>
        <end position="150"/>
    </location>
</feature>
<feature type="turn" evidence="13">
    <location>
        <begin position="164"/>
        <end position="166"/>
    </location>
</feature>
<feature type="helix" evidence="13">
    <location>
        <begin position="167"/>
        <end position="174"/>
    </location>
</feature>
<feature type="strand" evidence="13">
    <location>
        <begin position="183"/>
        <end position="185"/>
    </location>
</feature>
<feature type="helix" evidence="13">
    <location>
        <begin position="193"/>
        <end position="203"/>
    </location>
</feature>
<feature type="strand" evidence="13">
    <location>
        <begin position="207"/>
        <end position="209"/>
    </location>
</feature>
<feature type="strand" evidence="13">
    <location>
        <begin position="231"/>
        <end position="233"/>
    </location>
</feature>
<feature type="helix" evidence="13">
    <location>
        <begin position="240"/>
        <end position="242"/>
    </location>
</feature>
<feature type="strand" evidence="13">
    <location>
        <begin position="248"/>
        <end position="255"/>
    </location>
</feature>
<feature type="strand" evidence="13">
    <location>
        <begin position="257"/>
        <end position="261"/>
    </location>
</feature>
<feature type="strand" evidence="13">
    <location>
        <begin position="272"/>
        <end position="279"/>
    </location>
</feature>
<feature type="strand" evidence="13">
    <location>
        <begin position="282"/>
        <end position="285"/>
    </location>
</feature>
<feature type="helix" evidence="13">
    <location>
        <begin position="293"/>
        <end position="297"/>
    </location>
</feature>
<feature type="helix" evidence="13">
    <location>
        <begin position="299"/>
        <end position="302"/>
    </location>
</feature>
<feature type="strand" evidence="13">
    <location>
        <begin position="305"/>
        <end position="307"/>
    </location>
</feature>
<feature type="strand" evidence="13">
    <location>
        <begin position="312"/>
        <end position="315"/>
    </location>
</feature>
<feature type="strand" evidence="13">
    <location>
        <begin position="322"/>
        <end position="325"/>
    </location>
</feature>
<feature type="strand" evidence="13">
    <location>
        <begin position="327"/>
        <end position="329"/>
    </location>
</feature>
<feature type="turn" evidence="13">
    <location>
        <begin position="337"/>
        <end position="339"/>
    </location>
</feature>
<feature type="helix" evidence="13">
    <location>
        <begin position="342"/>
        <end position="356"/>
    </location>
</feature>
<organism>
    <name type="scientific">Mus musculus</name>
    <name type="common">Mouse</name>
    <dbReference type="NCBI Taxonomy" id="10090"/>
    <lineage>
        <taxon>Eukaryota</taxon>
        <taxon>Metazoa</taxon>
        <taxon>Chordata</taxon>
        <taxon>Craniata</taxon>
        <taxon>Vertebrata</taxon>
        <taxon>Euteleostomi</taxon>
        <taxon>Mammalia</taxon>
        <taxon>Eutheria</taxon>
        <taxon>Euarchontoglires</taxon>
        <taxon>Glires</taxon>
        <taxon>Rodentia</taxon>
        <taxon>Myomorpha</taxon>
        <taxon>Muroidea</taxon>
        <taxon>Muridae</taxon>
        <taxon>Murinae</taxon>
        <taxon>Mus</taxon>
        <taxon>Mus</taxon>
    </lineage>
</organism>
<proteinExistence type="evidence at protein level"/>
<gene>
    <name type="primary">Tnfaip3</name>
    <name type="synonym">Tnfip3</name>
</gene>
<accession>Q60769</accession>
<accession>Q3U968</accession>
<evidence type="ECO:0000250" key="1"/>
<evidence type="ECO:0000250" key="2">
    <source>
        <dbReference type="UniProtKB" id="P21580"/>
    </source>
</evidence>
<evidence type="ECO:0000255" key="3">
    <source>
        <dbReference type="PROSITE-ProRule" id="PRU00139"/>
    </source>
</evidence>
<evidence type="ECO:0000255" key="4">
    <source>
        <dbReference type="PROSITE-ProRule" id="PRU00451"/>
    </source>
</evidence>
<evidence type="ECO:0000256" key="5">
    <source>
        <dbReference type="SAM" id="MobiDB-lite"/>
    </source>
</evidence>
<evidence type="ECO:0000269" key="6">
    <source>
    </source>
</evidence>
<evidence type="ECO:0000269" key="7">
    <source>
    </source>
</evidence>
<evidence type="ECO:0000269" key="8">
    <source>
    </source>
</evidence>
<evidence type="ECO:0000269" key="9">
    <source>
    </source>
</evidence>
<evidence type="ECO:0000269" key="10">
    <source>
    </source>
</evidence>
<evidence type="ECO:0000269" key="11">
    <source>
    </source>
</evidence>
<evidence type="ECO:0000305" key="12"/>
<evidence type="ECO:0007829" key="13">
    <source>
        <dbReference type="PDB" id="5DQ6"/>
    </source>
</evidence>
<reference key="1">
    <citation type="journal article" date="1995" name="J. Immunol.">
        <title>Lymphoid expression and regulation of A20, an inhibitor of programmed cell death.</title>
        <authorList>
            <person name="Tewari M."/>
            <person name="Wolf F.W."/>
            <person name="Seldin M.F."/>
            <person name="O'Shea K.S."/>
            <person name="Dixit V.M."/>
            <person name="Turka L.A."/>
        </authorList>
    </citation>
    <scope>NUCLEOTIDE SEQUENCE [MRNA]</scope>
</reference>
<reference key="2">
    <citation type="journal article" date="1999" name="J. Cell Biol.">
        <title>The zinc finger protein A20 inhibits TNF-induced NF-B-dependent gene expression by interfering with an RIP- or TRAF2-mediated transactivation signal and directly binds to a novel NF-B-inhibiting protein ABIN.</title>
        <authorList>
            <person name="Heyninck K."/>
            <person name="De Valck D."/>
            <person name="Vanden Berghe W."/>
            <person name="Van Criekinge W."/>
            <person name="Contreras R."/>
            <person name="Fiers W."/>
            <person name="Haegeman G."/>
            <person name="Beyaert R."/>
        </authorList>
    </citation>
    <scope>NUCLEOTIDE SEQUENCE [MRNA]</scope>
    <scope>FUNCTION</scope>
</reference>
<reference key="3">
    <citation type="journal article" date="2005" name="Science">
        <title>The transcriptional landscape of the mammalian genome.</title>
        <authorList>
            <person name="Carninci P."/>
            <person name="Kasukawa T."/>
            <person name="Katayama S."/>
            <person name="Gough J."/>
            <person name="Frith M.C."/>
            <person name="Maeda N."/>
            <person name="Oyama R."/>
            <person name="Ravasi T."/>
            <person name="Lenhard B."/>
            <person name="Wells C."/>
            <person name="Kodzius R."/>
            <person name="Shimokawa K."/>
            <person name="Bajic V.B."/>
            <person name="Brenner S.E."/>
            <person name="Batalov S."/>
            <person name="Forrest A.R."/>
            <person name="Zavolan M."/>
            <person name="Davis M.J."/>
            <person name="Wilming L.G."/>
            <person name="Aidinis V."/>
            <person name="Allen J.E."/>
            <person name="Ambesi-Impiombato A."/>
            <person name="Apweiler R."/>
            <person name="Aturaliya R.N."/>
            <person name="Bailey T.L."/>
            <person name="Bansal M."/>
            <person name="Baxter L."/>
            <person name="Beisel K.W."/>
            <person name="Bersano T."/>
            <person name="Bono H."/>
            <person name="Chalk A.M."/>
            <person name="Chiu K.P."/>
            <person name="Choudhary V."/>
            <person name="Christoffels A."/>
            <person name="Clutterbuck D.R."/>
            <person name="Crowe M.L."/>
            <person name="Dalla E."/>
            <person name="Dalrymple B.P."/>
            <person name="de Bono B."/>
            <person name="Della Gatta G."/>
            <person name="di Bernardo D."/>
            <person name="Down T."/>
            <person name="Engstrom P."/>
            <person name="Fagiolini M."/>
            <person name="Faulkner G."/>
            <person name="Fletcher C.F."/>
            <person name="Fukushima T."/>
            <person name="Furuno M."/>
            <person name="Futaki S."/>
            <person name="Gariboldi M."/>
            <person name="Georgii-Hemming P."/>
            <person name="Gingeras T.R."/>
            <person name="Gojobori T."/>
            <person name="Green R.E."/>
            <person name="Gustincich S."/>
            <person name="Harbers M."/>
            <person name="Hayashi Y."/>
            <person name="Hensch T.K."/>
            <person name="Hirokawa N."/>
            <person name="Hill D."/>
            <person name="Huminiecki L."/>
            <person name="Iacono M."/>
            <person name="Ikeo K."/>
            <person name="Iwama A."/>
            <person name="Ishikawa T."/>
            <person name="Jakt M."/>
            <person name="Kanapin A."/>
            <person name="Katoh M."/>
            <person name="Kawasawa Y."/>
            <person name="Kelso J."/>
            <person name="Kitamura H."/>
            <person name="Kitano H."/>
            <person name="Kollias G."/>
            <person name="Krishnan S.P."/>
            <person name="Kruger A."/>
            <person name="Kummerfeld S.K."/>
            <person name="Kurochkin I.V."/>
            <person name="Lareau L.F."/>
            <person name="Lazarevic D."/>
            <person name="Lipovich L."/>
            <person name="Liu J."/>
            <person name="Liuni S."/>
            <person name="McWilliam S."/>
            <person name="Madan Babu M."/>
            <person name="Madera M."/>
            <person name="Marchionni L."/>
            <person name="Matsuda H."/>
            <person name="Matsuzawa S."/>
            <person name="Miki H."/>
            <person name="Mignone F."/>
            <person name="Miyake S."/>
            <person name="Morris K."/>
            <person name="Mottagui-Tabar S."/>
            <person name="Mulder N."/>
            <person name="Nakano N."/>
            <person name="Nakauchi H."/>
            <person name="Ng P."/>
            <person name="Nilsson R."/>
            <person name="Nishiguchi S."/>
            <person name="Nishikawa S."/>
            <person name="Nori F."/>
            <person name="Ohara O."/>
            <person name="Okazaki Y."/>
            <person name="Orlando V."/>
            <person name="Pang K.C."/>
            <person name="Pavan W.J."/>
            <person name="Pavesi G."/>
            <person name="Pesole G."/>
            <person name="Petrovsky N."/>
            <person name="Piazza S."/>
            <person name="Reed J."/>
            <person name="Reid J.F."/>
            <person name="Ring B.Z."/>
            <person name="Ringwald M."/>
            <person name="Rost B."/>
            <person name="Ruan Y."/>
            <person name="Salzberg S.L."/>
            <person name="Sandelin A."/>
            <person name="Schneider C."/>
            <person name="Schoenbach C."/>
            <person name="Sekiguchi K."/>
            <person name="Semple C.A."/>
            <person name="Seno S."/>
            <person name="Sessa L."/>
            <person name="Sheng Y."/>
            <person name="Shibata Y."/>
            <person name="Shimada H."/>
            <person name="Shimada K."/>
            <person name="Silva D."/>
            <person name="Sinclair B."/>
            <person name="Sperling S."/>
            <person name="Stupka E."/>
            <person name="Sugiura K."/>
            <person name="Sultana R."/>
            <person name="Takenaka Y."/>
            <person name="Taki K."/>
            <person name="Tammoja K."/>
            <person name="Tan S.L."/>
            <person name="Tang S."/>
            <person name="Taylor M.S."/>
            <person name="Tegner J."/>
            <person name="Teichmann S.A."/>
            <person name="Ueda H.R."/>
            <person name="van Nimwegen E."/>
            <person name="Verardo R."/>
            <person name="Wei C.L."/>
            <person name="Yagi K."/>
            <person name="Yamanishi H."/>
            <person name="Zabarovsky E."/>
            <person name="Zhu S."/>
            <person name="Zimmer A."/>
            <person name="Hide W."/>
            <person name="Bult C."/>
            <person name="Grimmond S.M."/>
            <person name="Teasdale R.D."/>
            <person name="Liu E.T."/>
            <person name="Brusic V."/>
            <person name="Quackenbush J."/>
            <person name="Wahlestedt C."/>
            <person name="Mattick J.S."/>
            <person name="Hume D.A."/>
            <person name="Kai C."/>
            <person name="Sasaki D."/>
            <person name="Tomaru Y."/>
            <person name="Fukuda S."/>
            <person name="Kanamori-Katayama M."/>
            <person name="Suzuki M."/>
            <person name="Aoki J."/>
            <person name="Arakawa T."/>
            <person name="Iida J."/>
            <person name="Imamura K."/>
            <person name="Itoh M."/>
            <person name="Kato T."/>
            <person name="Kawaji H."/>
            <person name="Kawagashira N."/>
            <person name="Kawashima T."/>
            <person name="Kojima M."/>
            <person name="Kondo S."/>
            <person name="Konno H."/>
            <person name="Nakano K."/>
            <person name="Ninomiya N."/>
            <person name="Nishio T."/>
            <person name="Okada M."/>
            <person name="Plessy C."/>
            <person name="Shibata K."/>
            <person name="Shiraki T."/>
            <person name="Suzuki S."/>
            <person name="Tagami M."/>
            <person name="Waki K."/>
            <person name="Watahiki A."/>
            <person name="Okamura-Oho Y."/>
            <person name="Suzuki H."/>
            <person name="Kawai J."/>
            <person name="Hayashizaki Y."/>
        </authorList>
    </citation>
    <scope>NUCLEOTIDE SEQUENCE [LARGE SCALE MRNA]</scope>
    <source>
        <strain>C57BL/6J</strain>
        <tissue>Bone marrow</tissue>
    </source>
</reference>
<reference key="4">
    <citation type="journal article" date="2001" name="FEBS Lett.">
        <title>Functional redundancy of the zinc fingers of A20 for inhibition of NF-kappaB activation and protein-protein interactions.</title>
        <authorList>
            <person name="Klinkenberg M."/>
            <person name="Van Huffel S."/>
            <person name="Heyninck K."/>
            <person name="Beyaert R."/>
        </authorList>
    </citation>
    <scope>FUNCTION</scope>
    <scope>INTERACTION WITH TNIP2; TAX1BP1; IKBKG AND TNIP1</scope>
</reference>
<reference key="5">
    <citation type="journal article" date="2004" name="Nat. Immunol.">
        <title>The ubiquitin-modifying enzyme A20 is required for termination of Toll-like receptor responses.</title>
        <authorList>
            <person name="Boone D.L."/>
            <person name="Turer E.E."/>
            <person name="Lee E.G."/>
            <person name="Ahmad R.C."/>
            <person name="Wheeler M.T."/>
            <person name="Tsui C."/>
            <person name="Hurley P."/>
            <person name="Chien M."/>
            <person name="Chai S."/>
            <person name="Hitotsumatsu O."/>
            <person name="McNally E."/>
            <person name="Pickart C."/>
            <person name="Ma A."/>
        </authorList>
    </citation>
    <scope>FUNCTION</scope>
    <scope>CATALYTIC ACTIVITY</scope>
    <scope>MUTAGENESIS OF ASP-100 AND CYS-103</scope>
</reference>
<reference key="6">
    <citation type="journal article" date="2005" name="Nat. Immunol.">
        <authorList>
            <person name="Boone D.L."/>
            <person name="Turer E.E."/>
            <person name="Lee E.G."/>
            <person name="Ahmad R.C."/>
            <person name="Wheeler M.T."/>
            <person name="Tsui C."/>
            <person name="Hurley P."/>
            <person name="Chien M."/>
            <person name="Chai S."/>
            <person name="Hitotsumatsu O."/>
            <person name="McNally E."/>
            <person name="Pickart C."/>
            <person name="Ma A."/>
        </authorList>
    </citation>
    <scope>ERRATUM OF PUBMED:15334086</scope>
</reference>
<reference key="7">
    <citation type="journal article" date="2008" name="Immunity">
        <title>The ubiquitin-editing enzyme A20 restricts nucleotide-binding oligomerization domain containing 2-triggered signals.</title>
        <authorList>
            <person name="Hitotsumatsu O."/>
            <person name="Ahmad R.C."/>
            <person name="Tavares R."/>
            <person name="Wang M."/>
            <person name="Philpott D."/>
            <person name="Turer E.E."/>
            <person name="Lee B.L."/>
            <person name="Shiffin N."/>
            <person name="Advincula R."/>
            <person name="Malynn B.A."/>
            <person name="Werts C."/>
            <person name="Ma A."/>
        </authorList>
    </citation>
    <scope>FUNCTION</scope>
</reference>
<reference key="8">
    <citation type="journal article" date="2009" name="EMBO J.">
        <title>The ubiquitin-editing enzyme A20 requires RNF11 to downregulate NF-kappaB signalling.</title>
        <authorList>
            <person name="Shembade N."/>
            <person name="Parvatiyar K."/>
            <person name="Harhaj N.S."/>
            <person name="Harhaj E.W."/>
        </authorList>
    </citation>
    <scope>INTERACTION WITH TAX1BP1; RNF11 AND RIPK1</scope>
</reference>
<reference key="9">
    <citation type="journal article" date="2010" name="Science">
        <title>Inhibition of NF-kappaB signaling by A20 through disruption of ubiquitin enzyme complexes.</title>
        <authorList>
            <person name="Shembade N."/>
            <person name="Ma A."/>
            <person name="Harhaj E.W."/>
        </authorList>
    </citation>
    <scope>FUNCTION</scope>
    <scope>INTERACTION WITH UBE2N</scope>
    <scope>MUTAGENESIS OF CYS-103</scope>
</reference>
<reference key="10">
    <citation type="journal article" date="2013" name="J. Biol. Chem.">
        <title>Immune responsive gene 1 (IRG1) promotes endotoxin tolerance by increasing A20 expression in macrophages through ROS.</title>
        <authorList>
            <person name="Li Y."/>
            <person name="Zhang P."/>
            <person name="Wang C."/>
            <person name="Han C."/>
            <person name="Meng J."/>
            <person name="Liu X."/>
            <person name="Xu S."/>
            <person name="Li N."/>
            <person name="Wang Q."/>
            <person name="Shi X."/>
            <person name="Cao X."/>
        </authorList>
    </citation>
    <scope>FUNCTION</scope>
    <scope>INDUCTION</scope>
</reference>
<protein>
    <recommendedName>
        <fullName>Tumor necrosis factor alpha-induced protein 3</fullName>
        <shortName>TNF alpha-induced protein 3</shortName>
        <ecNumber>2.3.2.-</ecNumber>
        <ecNumber>3.4.19.12</ecNumber>
    </recommendedName>
    <alternativeName>
        <fullName>Putative DNA-binding protein A20</fullName>
    </alternativeName>
    <alternativeName>
        <fullName>Zinc finger protein A20</fullName>
    </alternativeName>
</protein>
<dbReference type="EC" id="2.3.2.-"/>
<dbReference type="EC" id="3.4.19.12"/>
<dbReference type="EMBL" id="U19463">
    <property type="protein sequence ID" value="AAC52153.1"/>
    <property type="molecule type" value="mRNA"/>
</dbReference>
<dbReference type="EMBL" id="AK151921">
    <property type="protein sequence ID" value="BAE30799.1"/>
    <property type="molecule type" value="mRNA"/>
</dbReference>
<dbReference type="CCDS" id="CCDS23715.1"/>
<dbReference type="PIR" id="I49237">
    <property type="entry name" value="I49237"/>
</dbReference>
<dbReference type="RefSeq" id="NP_001415793.1">
    <property type="nucleotide sequence ID" value="NM_001428864.1"/>
</dbReference>
<dbReference type="RefSeq" id="NP_033423.3">
    <property type="nucleotide sequence ID" value="NM_009397.3"/>
</dbReference>
<dbReference type="RefSeq" id="XP_006512765.1">
    <property type="nucleotide sequence ID" value="XM_006512702.2"/>
</dbReference>
<dbReference type="PDB" id="5DQ6">
    <property type="method" value="X-ray"/>
    <property type="resolution" value="2.80 A"/>
    <property type="chains" value="A/B=1-360"/>
</dbReference>
<dbReference type="PDBsum" id="5DQ6"/>
<dbReference type="SMR" id="Q60769"/>
<dbReference type="BioGRID" id="204243">
    <property type="interactions" value="30"/>
</dbReference>
<dbReference type="CORUM" id="Q60769"/>
<dbReference type="DIP" id="DIP-41120N"/>
<dbReference type="FunCoup" id="Q60769">
    <property type="interactions" value="2637"/>
</dbReference>
<dbReference type="IntAct" id="Q60769">
    <property type="interactions" value="12"/>
</dbReference>
<dbReference type="MINT" id="Q60769"/>
<dbReference type="STRING" id="10090.ENSMUSP00000019997"/>
<dbReference type="GlyGen" id="Q60769">
    <property type="glycosylation" value="3 sites, 1 N-linked glycan (1 site), 1 O-linked glycan (1 site)"/>
</dbReference>
<dbReference type="iPTMnet" id="Q60769"/>
<dbReference type="PhosphoSitePlus" id="Q60769"/>
<dbReference type="jPOST" id="Q60769"/>
<dbReference type="PaxDb" id="10090-ENSMUSP00000019997"/>
<dbReference type="ProteomicsDB" id="259139"/>
<dbReference type="Antibodypedia" id="1049">
    <property type="antibodies" value="521 antibodies from 46 providers"/>
</dbReference>
<dbReference type="DNASU" id="21929"/>
<dbReference type="Ensembl" id="ENSMUST00000019997.11">
    <property type="protein sequence ID" value="ENSMUSP00000019997.5"/>
    <property type="gene ID" value="ENSMUSG00000019850.12"/>
</dbReference>
<dbReference type="Ensembl" id="ENSMUST00000105527.2">
    <property type="protein sequence ID" value="ENSMUSP00000101167.2"/>
    <property type="gene ID" value="ENSMUSG00000019850.12"/>
</dbReference>
<dbReference type="GeneID" id="21929"/>
<dbReference type="KEGG" id="mmu:21929"/>
<dbReference type="UCSC" id="uc007ena.3">
    <property type="organism name" value="mouse"/>
</dbReference>
<dbReference type="AGR" id="MGI:1196377"/>
<dbReference type="CTD" id="7128"/>
<dbReference type="MGI" id="MGI:1196377">
    <property type="gene designation" value="Tnfaip3"/>
</dbReference>
<dbReference type="VEuPathDB" id="HostDB:ENSMUSG00000019850"/>
<dbReference type="eggNOG" id="KOG4345">
    <property type="taxonomic scope" value="Eukaryota"/>
</dbReference>
<dbReference type="GeneTree" id="ENSGT00940000158448"/>
<dbReference type="HOGENOM" id="CLU_019606_0_0_1"/>
<dbReference type="InParanoid" id="Q60769"/>
<dbReference type="OMA" id="KCSGYCN"/>
<dbReference type="OrthoDB" id="10064699at2759"/>
<dbReference type="PhylomeDB" id="Q60769"/>
<dbReference type="TreeFam" id="TF323312"/>
<dbReference type="Reactome" id="R-MMU-168638">
    <property type="pathway name" value="NOD1/2 Signaling Pathway"/>
</dbReference>
<dbReference type="Reactome" id="R-MMU-5357786">
    <property type="pathway name" value="TNFR1-induced proapoptotic signaling"/>
</dbReference>
<dbReference type="Reactome" id="R-MMU-5357905">
    <property type="pathway name" value="Regulation of TNFR1 signaling"/>
</dbReference>
<dbReference type="Reactome" id="R-MMU-5357956">
    <property type="pathway name" value="TNFR1-induced NF-kappa-B signaling pathway"/>
</dbReference>
<dbReference type="Reactome" id="R-MMU-5689896">
    <property type="pathway name" value="Ovarian tumor domain proteases"/>
</dbReference>
<dbReference type="Reactome" id="R-MMU-936440">
    <property type="pathway name" value="Negative regulators of DDX58/IFIH1 signaling"/>
</dbReference>
<dbReference type="BioGRID-ORCS" id="21929">
    <property type="hits" value="23 hits in 79 CRISPR screens"/>
</dbReference>
<dbReference type="ChiTaRS" id="Tnfaip3">
    <property type="organism name" value="mouse"/>
</dbReference>
<dbReference type="PRO" id="PR:Q60769"/>
<dbReference type="Proteomes" id="UP000000589">
    <property type="component" value="Chromosome 10"/>
</dbReference>
<dbReference type="RNAct" id="Q60769">
    <property type="molecule type" value="protein"/>
</dbReference>
<dbReference type="Bgee" id="ENSMUSG00000019850">
    <property type="expression patterns" value="Expressed in retinal neural layer and 150 other cell types or tissues"/>
</dbReference>
<dbReference type="ExpressionAtlas" id="Q60769">
    <property type="expression patterns" value="baseline and differential"/>
</dbReference>
<dbReference type="GO" id="GO:0005737">
    <property type="term" value="C:cytoplasm"/>
    <property type="evidence" value="ECO:0000314"/>
    <property type="project" value="MGI"/>
</dbReference>
<dbReference type="GO" id="GO:0005764">
    <property type="term" value="C:lysosome"/>
    <property type="evidence" value="ECO:0007669"/>
    <property type="project" value="UniProtKB-SubCell"/>
</dbReference>
<dbReference type="GO" id="GO:0005634">
    <property type="term" value="C:nucleus"/>
    <property type="evidence" value="ECO:0007669"/>
    <property type="project" value="UniProtKB-SubCell"/>
</dbReference>
<dbReference type="GO" id="GO:0004843">
    <property type="term" value="F:cysteine-type deubiquitinase activity"/>
    <property type="evidence" value="ECO:0000250"/>
    <property type="project" value="UniProtKB"/>
</dbReference>
<dbReference type="GO" id="GO:0003677">
    <property type="term" value="F:DNA binding"/>
    <property type="evidence" value="ECO:0007669"/>
    <property type="project" value="UniProtKB-KW"/>
</dbReference>
<dbReference type="GO" id="GO:0042802">
    <property type="term" value="F:identical protein binding"/>
    <property type="evidence" value="ECO:0007669"/>
    <property type="project" value="Ensembl"/>
</dbReference>
<dbReference type="GO" id="GO:0019900">
    <property type="term" value="F:kinase binding"/>
    <property type="evidence" value="ECO:0000314"/>
    <property type="project" value="BHF-UCL"/>
</dbReference>
<dbReference type="GO" id="GO:0002020">
    <property type="term" value="F:protease binding"/>
    <property type="evidence" value="ECO:0007669"/>
    <property type="project" value="Ensembl"/>
</dbReference>
<dbReference type="GO" id="GO:0043130">
    <property type="term" value="F:ubiquitin binding"/>
    <property type="evidence" value="ECO:0007669"/>
    <property type="project" value="Ensembl"/>
</dbReference>
<dbReference type="GO" id="GO:0004842">
    <property type="term" value="F:ubiquitin-protein transferase activity"/>
    <property type="evidence" value="ECO:0000250"/>
    <property type="project" value="UniProtKB"/>
</dbReference>
<dbReference type="GO" id="GO:0008270">
    <property type="term" value="F:zinc ion binding"/>
    <property type="evidence" value="ECO:0007669"/>
    <property type="project" value="UniProtKB-KW"/>
</dbReference>
<dbReference type="GO" id="GO:0006915">
    <property type="term" value="P:apoptotic process"/>
    <property type="evidence" value="ECO:0007669"/>
    <property type="project" value="UniProtKB-KW"/>
</dbReference>
<dbReference type="GO" id="GO:0001922">
    <property type="term" value="P:B-1 B cell homeostasis"/>
    <property type="evidence" value="ECO:0000315"/>
    <property type="project" value="BHF-UCL"/>
</dbReference>
<dbReference type="GO" id="GO:0070301">
    <property type="term" value="P:cellular response to hydrogen peroxide"/>
    <property type="evidence" value="ECO:0000315"/>
    <property type="project" value="UniProtKB"/>
</dbReference>
<dbReference type="GO" id="GO:0071222">
    <property type="term" value="P:cellular response to lipopolysaccharide"/>
    <property type="evidence" value="ECO:0000250"/>
    <property type="project" value="BHF-UCL"/>
</dbReference>
<dbReference type="GO" id="GO:0072666">
    <property type="term" value="P:establishment of protein localization to vacuole"/>
    <property type="evidence" value="ECO:0000314"/>
    <property type="project" value="MGI"/>
</dbReference>
<dbReference type="GO" id="GO:0006954">
    <property type="term" value="P:inflammatory response"/>
    <property type="evidence" value="ECO:0007669"/>
    <property type="project" value="UniProtKB-KW"/>
</dbReference>
<dbReference type="GO" id="GO:0002315">
    <property type="term" value="P:marginal zone B cell differentiation"/>
    <property type="evidence" value="ECO:0000303"/>
    <property type="project" value="BHF-UCL"/>
</dbReference>
<dbReference type="GO" id="GO:0010507">
    <property type="term" value="P:negative regulation of autophagy"/>
    <property type="evidence" value="ECO:0000303"/>
    <property type="project" value="BHF-UCL"/>
</dbReference>
<dbReference type="GO" id="GO:0050869">
    <property type="term" value="P:negative regulation of B cell activation"/>
    <property type="evidence" value="ECO:0000314"/>
    <property type="project" value="BHF-UCL"/>
</dbReference>
<dbReference type="GO" id="GO:0043124">
    <property type="term" value="P:negative regulation of canonical NF-kappaB signal transduction"/>
    <property type="evidence" value="ECO:0000315"/>
    <property type="project" value="BHF-UCL"/>
</dbReference>
<dbReference type="GO" id="GO:2000349">
    <property type="term" value="P:negative regulation of CD40 signaling pathway"/>
    <property type="evidence" value="ECO:0000250"/>
    <property type="project" value="BHF-UCL"/>
</dbReference>
<dbReference type="GO" id="GO:0002677">
    <property type="term" value="P:negative regulation of chronic inflammatory response"/>
    <property type="evidence" value="ECO:0000315"/>
    <property type="project" value="BHF-UCL"/>
</dbReference>
<dbReference type="GO" id="GO:2000352">
    <property type="term" value="P:negative regulation of endothelial cell apoptotic process"/>
    <property type="evidence" value="ECO:0007669"/>
    <property type="project" value="Ensembl"/>
</dbReference>
<dbReference type="GO" id="GO:2001237">
    <property type="term" value="P:negative regulation of extrinsic apoptotic signaling pathway"/>
    <property type="evidence" value="ECO:0000315"/>
    <property type="project" value="BHF-UCL"/>
</dbReference>
<dbReference type="GO" id="GO:1902042">
    <property type="term" value="P:negative regulation of extrinsic apoptotic signaling pathway via death domain receptors"/>
    <property type="evidence" value="ECO:0000303"/>
    <property type="project" value="BHF-UCL"/>
</dbReference>
<dbReference type="GO" id="GO:0002632">
    <property type="term" value="P:negative regulation of granuloma formation"/>
    <property type="evidence" value="ECO:0000303"/>
    <property type="project" value="BHF-UCL"/>
</dbReference>
<dbReference type="GO" id="GO:0034115">
    <property type="term" value="P:negative regulation of heterotypic cell-cell adhesion"/>
    <property type="evidence" value="ECO:0000303"/>
    <property type="project" value="BHF-UCL"/>
</dbReference>
<dbReference type="GO" id="GO:0050728">
    <property type="term" value="P:negative regulation of inflammatory response"/>
    <property type="evidence" value="ECO:0000314"/>
    <property type="project" value="UniProtKB"/>
</dbReference>
<dbReference type="GO" id="GO:0045824">
    <property type="term" value="P:negative regulation of innate immune response"/>
    <property type="evidence" value="ECO:0000315"/>
    <property type="project" value="UniProtKB"/>
</dbReference>
<dbReference type="GO" id="GO:0032691">
    <property type="term" value="P:negative regulation of interleukin-1 beta production"/>
    <property type="evidence" value="ECO:0000315"/>
    <property type="project" value="BHF-UCL"/>
</dbReference>
<dbReference type="GO" id="GO:0032703">
    <property type="term" value="P:negative regulation of interleukin-2 production"/>
    <property type="evidence" value="ECO:0007669"/>
    <property type="project" value="Ensembl"/>
</dbReference>
<dbReference type="GO" id="GO:0032715">
    <property type="term" value="P:negative regulation of interleukin-6 production"/>
    <property type="evidence" value="ECO:0000315"/>
    <property type="project" value="BHF-UCL"/>
</dbReference>
<dbReference type="GO" id="GO:0070429">
    <property type="term" value="P:negative regulation of nucleotide-binding oligomerization domain containing 1 signaling pathway"/>
    <property type="evidence" value="ECO:0000315"/>
    <property type="project" value="BHF-UCL"/>
</dbReference>
<dbReference type="GO" id="GO:0070433">
    <property type="term" value="P:negative regulation of nucleotide-binding oligomerization domain containing 2 signaling pathway"/>
    <property type="evidence" value="ECO:0000314"/>
    <property type="project" value="BHF-UCL"/>
</dbReference>
<dbReference type="GO" id="GO:0031397">
    <property type="term" value="P:negative regulation of protein ubiquitination"/>
    <property type="evidence" value="ECO:0007669"/>
    <property type="project" value="Ensembl"/>
</dbReference>
<dbReference type="GO" id="GO:0048662">
    <property type="term" value="P:negative regulation of smooth muscle cell proliferation"/>
    <property type="evidence" value="ECO:0000250"/>
    <property type="project" value="BHF-UCL"/>
</dbReference>
<dbReference type="GO" id="GO:0034140">
    <property type="term" value="P:negative regulation of toll-like receptor 3 signaling pathway"/>
    <property type="evidence" value="ECO:0007669"/>
    <property type="project" value="Ensembl"/>
</dbReference>
<dbReference type="GO" id="GO:0034148">
    <property type="term" value="P:negative regulation of toll-like receptor 5 signaling pathway"/>
    <property type="evidence" value="ECO:0000314"/>
    <property type="project" value="BHF-UCL"/>
</dbReference>
<dbReference type="GO" id="GO:0032720">
    <property type="term" value="P:negative regulation of tumor necrosis factor production"/>
    <property type="evidence" value="ECO:0000315"/>
    <property type="project" value="BHF-UCL"/>
</dbReference>
<dbReference type="GO" id="GO:2000347">
    <property type="term" value="P:positive regulation of hepatocyte proliferation"/>
    <property type="evidence" value="ECO:0000314"/>
    <property type="project" value="BHF-UCL"/>
</dbReference>
<dbReference type="GO" id="GO:0045732">
    <property type="term" value="P:positive regulation of protein catabolic process"/>
    <property type="evidence" value="ECO:0000314"/>
    <property type="project" value="MGI"/>
</dbReference>
<dbReference type="GO" id="GO:0016579">
    <property type="term" value="P:protein deubiquitination"/>
    <property type="evidence" value="ECO:0000314"/>
    <property type="project" value="BHF-UCL"/>
</dbReference>
<dbReference type="GO" id="GO:0035871">
    <property type="term" value="P:protein K11-linked deubiquitination"/>
    <property type="evidence" value="ECO:0000250"/>
    <property type="project" value="UniProtKB"/>
</dbReference>
<dbReference type="GO" id="GO:0071108">
    <property type="term" value="P:protein K48-linked deubiquitination"/>
    <property type="evidence" value="ECO:0000250"/>
    <property type="project" value="UniProtKB"/>
</dbReference>
<dbReference type="GO" id="GO:0070936">
    <property type="term" value="P:protein K48-linked ubiquitination"/>
    <property type="evidence" value="ECO:0000250"/>
    <property type="project" value="UniProtKB"/>
</dbReference>
<dbReference type="GO" id="GO:0070536">
    <property type="term" value="P:protein K63-linked deubiquitination"/>
    <property type="evidence" value="ECO:0000314"/>
    <property type="project" value="MGI"/>
</dbReference>
<dbReference type="GO" id="GO:0006508">
    <property type="term" value="P:proteolysis"/>
    <property type="evidence" value="ECO:0007669"/>
    <property type="project" value="UniProtKB-KW"/>
</dbReference>
<dbReference type="GO" id="GO:0002634">
    <property type="term" value="P:regulation of germinal center formation"/>
    <property type="evidence" value="ECO:0000315"/>
    <property type="project" value="BHF-UCL"/>
</dbReference>
<dbReference type="GO" id="GO:0002637">
    <property type="term" value="P:regulation of immunoglobulin production"/>
    <property type="evidence" value="ECO:0000305"/>
    <property type="project" value="BHF-UCL"/>
</dbReference>
<dbReference type="GO" id="GO:0045088">
    <property type="term" value="P:regulation of innate immune response"/>
    <property type="evidence" value="ECO:0000305"/>
    <property type="project" value="BHF-UCL"/>
</dbReference>
<dbReference type="GO" id="GO:0002237">
    <property type="term" value="P:response to molecule of bacterial origin"/>
    <property type="evidence" value="ECO:0000314"/>
    <property type="project" value="BHF-UCL"/>
</dbReference>
<dbReference type="GO" id="GO:0032495">
    <property type="term" value="P:response to muramyl dipeptide"/>
    <property type="evidence" value="ECO:0000315"/>
    <property type="project" value="BHF-UCL"/>
</dbReference>
<dbReference type="GO" id="GO:0009611">
    <property type="term" value="P:response to wounding"/>
    <property type="evidence" value="ECO:0000303"/>
    <property type="project" value="BHF-UCL"/>
</dbReference>
<dbReference type="GO" id="GO:0072573">
    <property type="term" value="P:tolerance induction to lipopolysaccharide"/>
    <property type="evidence" value="ECO:0007669"/>
    <property type="project" value="Ensembl"/>
</dbReference>
<dbReference type="CDD" id="cd22766">
    <property type="entry name" value="OTU_TNFAIP3"/>
    <property type="match status" value="1"/>
</dbReference>
<dbReference type="FunFam" id="4.10.240.30:FF:000001">
    <property type="entry name" value="Tumor necrosis factor alpha-induced protein 3"/>
    <property type="match status" value="1"/>
</dbReference>
<dbReference type="FunFam" id="4.10.240.30:FF:000003">
    <property type="entry name" value="Tumor necrosis factor alpha-induced protein 3"/>
    <property type="match status" value="1"/>
</dbReference>
<dbReference type="FunFam" id="1.20.5.4770:FF:000005">
    <property type="entry name" value="tumor necrosis factor alpha-induced protein 3"/>
    <property type="match status" value="1"/>
</dbReference>
<dbReference type="FunFam" id="3.90.70.80:FF:000011">
    <property type="entry name" value="tumor necrosis factor alpha-induced protein 3"/>
    <property type="match status" value="1"/>
</dbReference>
<dbReference type="FunFam" id="4.10.240.30:FF:000004">
    <property type="entry name" value="tumor necrosis factor alpha-induced protein 3 isoform X2"/>
    <property type="match status" value="1"/>
</dbReference>
<dbReference type="FunFam" id="4.10.240.30:FF:000002">
    <property type="entry name" value="Tumor necrosis factor, alpha-induced protein 3"/>
    <property type="match status" value="1"/>
</dbReference>
<dbReference type="Gene3D" id="1.20.5.4770">
    <property type="match status" value="1"/>
</dbReference>
<dbReference type="Gene3D" id="3.90.70.80">
    <property type="match status" value="1"/>
</dbReference>
<dbReference type="Gene3D" id="4.10.240.30">
    <property type="match status" value="3"/>
</dbReference>
<dbReference type="InterPro" id="IPR051346">
    <property type="entry name" value="OTU_Deubiquitinase"/>
</dbReference>
<dbReference type="InterPro" id="IPR003323">
    <property type="entry name" value="OTU_dom"/>
</dbReference>
<dbReference type="InterPro" id="IPR002653">
    <property type="entry name" value="Znf_A20"/>
</dbReference>
<dbReference type="PANTHER" id="PTHR13367:SF3">
    <property type="entry name" value="TUMOR NECROSIS FACTOR ALPHA-INDUCED PROTEIN 3"/>
    <property type="match status" value="1"/>
</dbReference>
<dbReference type="PANTHER" id="PTHR13367">
    <property type="entry name" value="UBIQUITIN THIOESTERASE"/>
    <property type="match status" value="1"/>
</dbReference>
<dbReference type="Pfam" id="PF02338">
    <property type="entry name" value="OTU"/>
    <property type="match status" value="1"/>
</dbReference>
<dbReference type="Pfam" id="PF01754">
    <property type="entry name" value="zf-A20"/>
    <property type="match status" value="5"/>
</dbReference>
<dbReference type="SMART" id="SM00259">
    <property type="entry name" value="ZnF_A20"/>
    <property type="match status" value="7"/>
</dbReference>
<dbReference type="PROSITE" id="PS50802">
    <property type="entry name" value="OTU"/>
    <property type="match status" value="1"/>
</dbReference>
<dbReference type="PROSITE" id="PS51036">
    <property type="entry name" value="ZF_A20"/>
    <property type="match status" value="7"/>
</dbReference>
<sequence>MAEQLLPQALYLSNMRKAVKIRERTPEDIFKPTNGIIYHFKTMHRYTLEMFRTCQFCPQFREIIHKALIDRSVQASLESQKKLNWCREVRKLVALKTNGDGNCLMHAACQYMWGVQDTDLVLRKALCSTLKETDTRNFKFRWQLESLKSQEFVETGLCYDTRNWNDEWDNLVKMASADTPAARSGLQYNSLEEIHIFVLSNILRRPIIVISDKMLRSLESGSNFAPLKVGGIYLPLHWPAQECYRYPIVLGYDSQHFVPLVTLKDSGPELRAVPLVNRDRGRFEDLKVHFLTDPENEMKEKLLKEYLIVMEIPVQGWDHGTTHLINAAKLDEANLPKEINLVDDYFELVQHEYKKWQENSDQARRAAHAQNPLEPSTPQLSLMDIKCETPNCPFFMSVNTQPLCHECSERRQKNQSKLPKLNSKLGPEGLPGVGLGSSNWSPEETAGGPHSAPPTAPSLFLFSETTAMKCRSPGCPFTLNVQHNGFCERCHARQINASHTADPGKCQACLQDVTRTFNGICSTCFKRTTAEPSSSLTSSIPASCHQRSKSDPSQLIQSLTPHSCHRTGNVSPSGCLSQAARTPGDRAGTSKCRKAGCMYFGTPENKGFCTLCFIEYRENKQSVTASEKAGSPAPRFQNNVPCLGRECGTLGSTMFEGYCQKCFIEAQNQRFHEARRTEEQLRSSQHRDMPRTTQVASRLKCARASCKNILACRSEELCMECQHLSQRVGSVAHRGEPTPEEPPKQRCRAPACDHFGNAKCNGYCNECYQFKQMYG</sequence>